<name>DAPH_LEUCK</name>
<proteinExistence type="inferred from homology"/>
<organism>
    <name type="scientific">Leuconostoc citreum (strain KM20)</name>
    <dbReference type="NCBI Taxonomy" id="349519"/>
    <lineage>
        <taxon>Bacteria</taxon>
        <taxon>Bacillati</taxon>
        <taxon>Bacillota</taxon>
        <taxon>Bacilli</taxon>
        <taxon>Lactobacillales</taxon>
        <taxon>Lactobacillaceae</taxon>
        <taxon>Leuconostoc</taxon>
    </lineage>
</organism>
<comment type="function">
    <text evidence="1">Catalyzes the transfer of an acetyl group from acetyl-CoA to tetrahydrodipicolinate.</text>
</comment>
<comment type="catalytic activity">
    <reaction evidence="1">
        <text>(S)-2,3,4,5-tetrahydrodipicolinate + acetyl-CoA + H2O = L-2-acetamido-6-oxoheptanedioate + CoA</text>
        <dbReference type="Rhea" id="RHEA:13085"/>
        <dbReference type="ChEBI" id="CHEBI:15377"/>
        <dbReference type="ChEBI" id="CHEBI:16845"/>
        <dbReference type="ChEBI" id="CHEBI:57287"/>
        <dbReference type="ChEBI" id="CHEBI:57288"/>
        <dbReference type="ChEBI" id="CHEBI:58117"/>
        <dbReference type="EC" id="2.3.1.89"/>
    </reaction>
</comment>
<comment type="pathway">
    <text evidence="1">Amino-acid biosynthesis; L-lysine biosynthesis via DAP pathway; LL-2,6-diaminopimelate from (S)-tetrahydrodipicolinate (acetylase route): step 1/3.</text>
</comment>
<comment type="similarity">
    <text evidence="1">Belongs to the transferase hexapeptide repeat family. DapH subfamily.</text>
</comment>
<dbReference type="EC" id="2.3.1.89" evidence="1"/>
<dbReference type="EMBL" id="DQ489736">
    <property type="protein sequence ID" value="ACA82982.1"/>
    <property type="molecule type" value="Genomic_DNA"/>
</dbReference>
<dbReference type="SMR" id="B1MZN0"/>
<dbReference type="STRING" id="349519.LCK_01155"/>
<dbReference type="KEGG" id="lci:LCK_01155"/>
<dbReference type="eggNOG" id="COG2171">
    <property type="taxonomic scope" value="Bacteria"/>
</dbReference>
<dbReference type="HOGENOM" id="CLU_103751_0_0_9"/>
<dbReference type="OrthoDB" id="9788080at2"/>
<dbReference type="UniPathway" id="UPA00034">
    <property type="reaction ID" value="UER00022"/>
</dbReference>
<dbReference type="Proteomes" id="UP000002166">
    <property type="component" value="Chromosome"/>
</dbReference>
<dbReference type="GO" id="GO:0047200">
    <property type="term" value="F:tetrahydrodipicolinate N-acetyltransferase activity"/>
    <property type="evidence" value="ECO:0007669"/>
    <property type="project" value="UniProtKB-EC"/>
</dbReference>
<dbReference type="GO" id="GO:0019877">
    <property type="term" value="P:diaminopimelate biosynthetic process"/>
    <property type="evidence" value="ECO:0007669"/>
    <property type="project" value="UniProtKB-UniRule"/>
</dbReference>
<dbReference type="GO" id="GO:0009089">
    <property type="term" value="P:lysine biosynthetic process via diaminopimelate"/>
    <property type="evidence" value="ECO:0007669"/>
    <property type="project" value="UniProtKB-UniRule"/>
</dbReference>
<dbReference type="Gene3D" id="2.160.10.10">
    <property type="entry name" value="Hexapeptide repeat proteins"/>
    <property type="match status" value="1"/>
</dbReference>
<dbReference type="Gene3D" id="3.30.70.250">
    <property type="entry name" value="Malonyl-CoA ACP transacylase, ACP-binding"/>
    <property type="match status" value="1"/>
</dbReference>
<dbReference type="HAMAP" id="MF_01691">
    <property type="entry name" value="DapH"/>
    <property type="match status" value="1"/>
</dbReference>
<dbReference type="InterPro" id="IPR019873">
    <property type="entry name" value="DapH"/>
</dbReference>
<dbReference type="InterPro" id="IPR013710">
    <property type="entry name" value="DapH_N"/>
</dbReference>
<dbReference type="InterPro" id="IPR001451">
    <property type="entry name" value="Hexapep"/>
</dbReference>
<dbReference type="InterPro" id="IPR018357">
    <property type="entry name" value="Hexapep_transf_CS"/>
</dbReference>
<dbReference type="InterPro" id="IPR050179">
    <property type="entry name" value="Trans_hexapeptide_repeat"/>
</dbReference>
<dbReference type="InterPro" id="IPR011004">
    <property type="entry name" value="Trimer_LpxA-like_sf"/>
</dbReference>
<dbReference type="NCBIfam" id="TIGR03532">
    <property type="entry name" value="DapD_Ac"/>
    <property type="match status" value="1"/>
</dbReference>
<dbReference type="PANTHER" id="PTHR43300:SF10">
    <property type="entry name" value="2,3,4,5-TETRAHYDROPYRIDINE-2,6-DICARBOXYLATE N-ACETYLTRANSFERASE"/>
    <property type="match status" value="1"/>
</dbReference>
<dbReference type="PANTHER" id="PTHR43300">
    <property type="entry name" value="ACETYLTRANSFERASE"/>
    <property type="match status" value="1"/>
</dbReference>
<dbReference type="Pfam" id="PF08503">
    <property type="entry name" value="DapH_N"/>
    <property type="match status" value="1"/>
</dbReference>
<dbReference type="Pfam" id="PF00132">
    <property type="entry name" value="Hexapep"/>
    <property type="match status" value="1"/>
</dbReference>
<dbReference type="Pfam" id="PF14602">
    <property type="entry name" value="Hexapep_2"/>
    <property type="match status" value="1"/>
</dbReference>
<dbReference type="SUPFAM" id="SSF51161">
    <property type="entry name" value="Trimeric LpxA-like enzymes"/>
    <property type="match status" value="1"/>
</dbReference>
<dbReference type="PROSITE" id="PS00101">
    <property type="entry name" value="HEXAPEP_TRANSFERASES"/>
    <property type="match status" value="2"/>
</dbReference>
<accession>B1MZN0</accession>
<reference key="1">
    <citation type="journal article" date="2008" name="J. Bacteriol.">
        <title>Complete genome sequence of Leuconostoc citreum KM20.</title>
        <authorList>
            <person name="Kim J.F."/>
            <person name="Jeong H."/>
            <person name="Lee J.-S."/>
            <person name="Choi S.-H."/>
            <person name="Ha M."/>
            <person name="Hur C.-G."/>
            <person name="Kim J.-S."/>
            <person name="Lee S."/>
            <person name="Park H.-S."/>
            <person name="Park Y.-H."/>
            <person name="Oh T.K."/>
        </authorList>
    </citation>
    <scope>NUCLEOTIDE SEQUENCE [LARGE SCALE GENOMIC DNA]</scope>
    <source>
        <strain>KM20</strain>
    </source>
</reference>
<sequence>MTTANDAQQLISFIANAKKVTPVKVTYKGVLTGEIPATVQQFGGVSFGQLIGDWSEIQPLIAALPAENVFVENDARNSAVPLLDKKAVNARIEPGAIIRDQVTIGDNAVIMLGAVINIGAEIGSGTMIDMGAVLGGRAIVGEQSHIGAGAVLAGVIEPASAQPVRIGDHVLVGANAVVIEGVQVGDGAVVAAGAIVTKDVPANTVVAGVPAKIIKQIDSKTQQKTALIDALRGL</sequence>
<feature type="chain" id="PRO_0000376674" description="2,3,4,5-tetrahydropyridine-2,6-dicarboxylate N-acetyltransferase">
    <location>
        <begin position="1"/>
        <end position="234"/>
    </location>
</feature>
<gene>
    <name evidence="1" type="primary">dapH</name>
    <name type="ordered locus">LCK_01155</name>
</gene>
<protein>
    <recommendedName>
        <fullName evidence="1">2,3,4,5-tetrahydropyridine-2,6-dicarboxylate N-acetyltransferase</fullName>
        <ecNumber evidence="1">2.3.1.89</ecNumber>
    </recommendedName>
    <alternativeName>
        <fullName evidence="1">Tetrahydrodipicolinate N-acetyltransferase</fullName>
        <shortName evidence="1">THP acetyltransferase</shortName>
        <shortName evidence="1">Tetrahydropicolinate acetylase</shortName>
    </alternativeName>
</protein>
<keyword id="KW-0012">Acyltransferase</keyword>
<keyword id="KW-0028">Amino-acid biosynthesis</keyword>
<keyword id="KW-0220">Diaminopimelate biosynthesis</keyword>
<keyword id="KW-0457">Lysine biosynthesis</keyword>
<keyword id="KW-1185">Reference proteome</keyword>
<keyword id="KW-0677">Repeat</keyword>
<keyword id="KW-0808">Transferase</keyword>
<evidence type="ECO:0000255" key="1">
    <source>
        <dbReference type="HAMAP-Rule" id="MF_01691"/>
    </source>
</evidence>